<reference key="1">
    <citation type="submission" date="2005-07" db="EMBL/GenBank/DDBJ databases">
        <authorList>
            <person name="Mural R.J."/>
            <person name="Adams M.D."/>
            <person name="Myers E.W."/>
            <person name="Smith H.O."/>
            <person name="Venter J.C."/>
        </authorList>
    </citation>
    <scope>NUCLEOTIDE SEQUENCE [LARGE SCALE GENOMIC DNA]</scope>
    <source>
        <strain>Brown Norway</strain>
    </source>
</reference>
<gene>
    <name type="primary">Setd6</name>
</gene>
<keyword id="KW-0488">Methylation</keyword>
<keyword id="KW-0489">Methyltransferase</keyword>
<keyword id="KW-0539">Nucleus</keyword>
<keyword id="KW-0597">Phosphoprotein</keyword>
<keyword id="KW-1185">Reference proteome</keyword>
<keyword id="KW-0949">S-adenosyl-L-methionine</keyword>
<keyword id="KW-0808">Transferase</keyword>
<comment type="function">
    <text evidence="1 2">Protein-lysine N-methyltransferase. Monomethylates 'Lys-310' of the RELA subunit of NF-kappa-B complex, leading to down-regulation of NF-kappa-B transcription factor activity. Monomethylates 'Lys-8' of H2AZ (H2AZK8me1) (By similarity). Required for the maintenance of embryonic stem cell self-renewal (By similarity). Methylates PAK4.</text>
</comment>
<comment type="catalytic activity">
    <reaction evidence="1">
        <text>L-lysyl-[protein] + S-adenosyl-L-methionine = N(6)-methyl-L-lysyl-[protein] + S-adenosyl-L-homocysteine + H(+)</text>
        <dbReference type="Rhea" id="RHEA:51736"/>
        <dbReference type="Rhea" id="RHEA-COMP:9752"/>
        <dbReference type="Rhea" id="RHEA-COMP:13053"/>
        <dbReference type="ChEBI" id="CHEBI:15378"/>
        <dbReference type="ChEBI" id="CHEBI:29969"/>
        <dbReference type="ChEBI" id="CHEBI:57856"/>
        <dbReference type="ChEBI" id="CHEBI:59789"/>
        <dbReference type="ChEBI" id="CHEBI:61929"/>
    </reaction>
    <physiologicalReaction direction="left-to-right" evidence="1">
        <dbReference type="Rhea" id="RHEA:51737"/>
    </physiologicalReaction>
</comment>
<comment type="catalytic activity">
    <reaction evidence="1">
        <text>L-lysyl(8)-[histone H2AZ] + S-adenosyl-L-methionine = N(6)-methyl-L-lysyl(8)-[histone H2AZ] + S-adenosyl-L-homocysteine + H(+)</text>
        <dbReference type="Rhea" id="RHEA:67808"/>
        <dbReference type="Rhea" id="RHEA-COMP:17357"/>
        <dbReference type="Rhea" id="RHEA-COMP:17358"/>
        <dbReference type="ChEBI" id="CHEBI:15378"/>
        <dbReference type="ChEBI" id="CHEBI:29969"/>
        <dbReference type="ChEBI" id="CHEBI:57856"/>
        <dbReference type="ChEBI" id="CHEBI:59789"/>
        <dbReference type="ChEBI" id="CHEBI:61929"/>
    </reaction>
    <physiologicalReaction direction="left-to-right" evidence="1">
        <dbReference type="Rhea" id="RHEA:67809"/>
    </physiologicalReaction>
</comment>
<comment type="subunit">
    <text evidence="1">Monomer, homodimer and homotrimer; these structures are stabilized in the presence of S-adenosyl-L-methionine (SAM).</text>
</comment>
<comment type="subcellular location">
    <subcellularLocation>
        <location evidence="1">Nucleus</location>
    </subcellularLocation>
</comment>
<comment type="PTM">
    <text evidence="1">Automethylated.</text>
</comment>
<comment type="similarity">
    <text evidence="3">Belongs to the class V-like SAM-binding methyltransferase superfamily. Histone-lysine methyltransferase family. SETD6 subfamily.</text>
</comment>
<dbReference type="EC" id="2.1.1.-" evidence="1"/>
<dbReference type="EMBL" id="CH474006">
    <property type="protein sequence ID" value="EDL87271.1"/>
    <property type="molecule type" value="Genomic_DNA"/>
</dbReference>
<dbReference type="RefSeq" id="NP_001099637.1">
    <property type="nucleotide sequence ID" value="NM_001106167.1"/>
</dbReference>
<dbReference type="SMR" id="D3ZSK5"/>
<dbReference type="FunCoup" id="D3ZSK5">
    <property type="interactions" value="1024"/>
</dbReference>
<dbReference type="STRING" id="10116.ENSRNOP00000016626"/>
<dbReference type="PhosphoSitePlus" id="D3ZSK5"/>
<dbReference type="PaxDb" id="10116-ENSRNOP00000016626"/>
<dbReference type="PeptideAtlas" id="D3ZSK5"/>
<dbReference type="Ensembl" id="ENSRNOT00000016626.6">
    <property type="protein sequence ID" value="ENSRNOP00000016626.4"/>
    <property type="gene ID" value="ENSRNOG00000012447.6"/>
</dbReference>
<dbReference type="GeneID" id="291844"/>
<dbReference type="KEGG" id="rno:291844"/>
<dbReference type="UCSC" id="RGD:1560538">
    <property type="organism name" value="rat"/>
</dbReference>
<dbReference type="AGR" id="RGD:1560538"/>
<dbReference type="CTD" id="79918"/>
<dbReference type="RGD" id="1560538">
    <property type="gene designation" value="Setd6"/>
</dbReference>
<dbReference type="eggNOG" id="KOG1338">
    <property type="taxonomic scope" value="Eukaryota"/>
</dbReference>
<dbReference type="GeneTree" id="ENSGT00940000153577"/>
<dbReference type="HOGENOM" id="CLU_017135_2_0_1"/>
<dbReference type="InParanoid" id="D3ZSK5"/>
<dbReference type="OMA" id="RVDWWLE"/>
<dbReference type="OrthoDB" id="341421at2759"/>
<dbReference type="PhylomeDB" id="D3ZSK5"/>
<dbReference type="TreeFam" id="TF106399"/>
<dbReference type="Reactome" id="R-RNO-3214841">
    <property type="pathway name" value="PKMTs methylate histone lysines"/>
</dbReference>
<dbReference type="PRO" id="PR:D3ZSK5"/>
<dbReference type="Proteomes" id="UP000002494">
    <property type="component" value="Chromosome 19"/>
</dbReference>
<dbReference type="Proteomes" id="UP000234681">
    <property type="component" value="Chromosome 19"/>
</dbReference>
<dbReference type="Bgee" id="ENSRNOG00000012447">
    <property type="expression patterns" value="Expressed in liver and 20 other cell types or tissues"/>
</dbReference>
<dbReference type="GO" id="GO:0005634">
    <property type="term" value="C:nucleus"/>
    <property type="evidence" value="ECO:0000250"/>
    <property type="project" value="UniProtKB"/>
</dbReference>
<dbReference type="GO" id="GO:0051059">
    <property type="term" value="F:NF-kappaB binding"/>
    <property type="evidence" value="ECO:0000266"/>
    <property type="project" value="RGD"/>
</dbReference>
<dbReference type="GO" id="GO:0016279">
    <property type="term" value="F:protein-lysine N-methyltransferase activity"/>
    <property type="evidence" value="ECO:0000250"/>
    <property type="project" value="UniProtKB"/>
</dbReference>
<dbReference type="GO" id="GO:1904047">
    <property type="term" value="F:S-adenosyl-L-methionine binding"/>
    <property type="evidence" value="ECO:0000250"/>
    <property type="project" value="UniProtKB"/>
</dbReference>
<dbReference type="GO" id="GO:0032088">
    <property type="term" value="P:negative regulation of NF-kappaB transcription factor activity"/>
    <property type="evidence" value="ECO:0000250"/>
    <property type="project" value="UniProtKB"/>
</dbReference>
<dbReference type="GO" id="GO:0018026">
    <property type="term" value="P:peptidyl-lysine monomethylation"/>
    <property type="evidence" value="ECO:0000250"/>
    <property type="project" value="UniProtKB"/>
</dbReference>
<dbReference type="GO" id="GO:0050727">
    <property type="term" value="P:regulation of inflammatory response"/>
    <property type="evidence" value="ECO:0000250"/>
    <property type="project" value="UniProtKB"/>
</dbReference>
<dbReference type="GO" id="GO:0048863">
    <property type="term" value="P:stem cell differentiation"/>
    <property type="evidence" value="ECO:0000250"/>
    <property type="project" value="UniProtKB"/>
</dbReference>
<dbReference type="GO" id="GO:0019827">
    <property type="term" value="P:stem cell population maintenance"/>
    <property type="evidence" value="ECO:0000250"/>
    <property type="project" value="UniProtKB"/>
</dbReference>
<dbReference type="CDD" id="cd19178">
    <property type="entry name" value="SET_SETD6"/>
    <property type="match status" value="1"/>
</dbReference>
<dbReference type="FunFam" id="3.90.1410.10:FF:000004">
    <property type="entry name" value="N-lysine methyltransferase SETD6"/>
    <property type="match status" value="1"/>
</dbReference>
<dbReference type="FunFam" id="3.90.1420.10:FF:000002">
    <property type="entry name" value="N-lysine methyltransferase SETD6"/>
    <property type="match status" value="1"/>
</dbReference>
<dbReference type="Gene3D" id="3.90.1420.10">
    <property type="entry name" value="Rubisco LSMT, substrate-binding domain"/>
    <property type="match status" value="1"/>
</dbReference>
<dbReference type="Gene3D" id="3.90.1410.10">
    <property type="entry name" value="set domain protein methyltransferase, domain 1"/>
    <property type="match status" value="1"/>
</dbReference>
<dbReference type="InterPro" id="IPR011383">
    <property type="entry name" value="N-lys_methylase_SETD6"/>
</dbReference>
<dbReference type="InterPro" id="IPR015353">
    <property type="entry name" value="Rubisco_LSMT_subst-bd"/>
</dbReference>
<dbReference type="InterPro" id="IPR036464">
    <property type="entry name" value="Rubisco_LSMT_subst-bd_sf"/>
</dbReference>
<dbReference type="InterPro" id="IPR001214">
    <property type="entry name" value="SET_dom"/>
</dbReference>
<dbReference type="InterPro" id="IPR046341">
    <property type="entry name" value="SET_dom_sf"/>
</dbReference>
<dbReference type="InterPro" id="IPR050600">
    <property type="entry name" value="SETD3_SETD6_MTase"/>
</dbReference>
<dbReference type="InterPro" id="IPR044430">
    <property type="entry name" value="SETD6_SET"/>
</dbReference>
<dbReference type="PANTHER" id="PTHR13271:SF34">
    <property type="entry name" value="N-LYSINE METHYLTRANSFERASE SETD6"/>
    <property type="match status" value="1"/>
</dbReference>
<dbReference type="PANTHER" id="PTHR13271">
    <property type="entry name" value="UNCHARACTERIZED PUTATIVE METHYLTRANSFERASE"/>
    <property type="match status" value="1"/>
</dbReference>
<dbReference type="Pfam" id="PF09273">
    <property type="entry name" value="Rubis-subs-bind"/>
    <property type="match status" value="1"/>
</dbReference>
<dbReference type="Pfam" id="PF00856">
    <property type="entry name" value="SET"/>
    <property type="match status" value="1"/>
</dbReference>
<dbReference type="PIRSF" id="PIRSF011771">
    <property type="entry name" value="RMS1_SET"/>
    <property type="match status" value="1"/>
</dbReference>
<dbReference type="SUPFAM" id="SSF81822">
    <property type="entry name" value="RuBisCo LSMT C-terminal, substrate-binding domain"/>
    <property type="match status" value="1"/>
</dbReference>
<dbReference type="SUPFAM" id="SSF82199">
    <property type="entry name" value="SET domain"/>
    <property type="match status" value="1"/>
</dbReference>
<dbReference type="PROSITE" id="PS50280">
    <property type="entry name" value="SET"/>
    <property type="match status" value="1"/>
</dbReference>
<name>SETD6_RAT</name>
<sequence>MAAPAKRARVSDASPLAAPCPVPRAAARVPLPLPAGPSGHEPESDAVAGFLRWCTRVGLELSPKVLVSRQGTVAGYGMVARESVQPGELLFAVPRSALLSPHTCSISDLLERERGALQSLSGWVPLLLALLHELQAPASPWSPYFALWPELGRLEHPMFWPEEERLRLLKGTGVPEAVEKDLVNIRSEYYSIVLPFMEAHSDLFSPTVRSLELYRQLVALVMAYSFQEPLEEEEDEKEPNSPLMVPAADILNHIANHNANLEYSAEYLRMVATQPILKGHEIFNTYGQMANWQLIHMYGFAEPYPNNTDDTADIQMVAVREAALQGTEDETERLLLCERWDFLCKQELVGEEGAFVIGREEVLTEEELATTLKVLCMPAEEFRDYKERAGWGEEETEDGSLAITNIPKLQESWKRLLRDSVLLTLQTYATDLKTEQDLLSNKEVYAKLSWREQQALQVRYGQKMILHRLLELTS</sequence>
<protein>
    <recommendedName>
        <fullName>N-lysine methyltransferase SETD6</fullName>
        <ecNumber evidence="1">2.1.1.-</ecNumber>
    </recommendedName>
    <alternativeName>
        <fullName>SET domain-containing protein 6</fullName>
    </alternativeName>
</protein>
<accession>D3ZSK5</accession>
<evidence type="ECO:0000250" key="1">
    <source>
        <dbReference type="UniProtKB" id="Q8TBK2"/>
    </source>
</evidence>
<evidence type="ECO:0000250" key="2">
    <source>
        <dbReference type="UniProtKB" id="Q9CWY3"/>
    </source>
</evidence>
<evidence type="ECO:0000255" key="3">
    <source>
        <dbReference type="PROSITE-ProRule" id="PRU00190"/>
    </source>
</evidence>
<organism>
    <name type="scientific">Rattus norvegicus</name>
    <name type="common">Rat</name>
    <dbReference type="NCBI Taxonomy" id="10116"/>
    <lineage>
        <taxon>Eukaryota</taxon>
        <taxon>Metazoa</taxon>
        <taxon>Chordata</taxon>
        <taxon>Craniata</taxon>
        <taxon>Vertebrata</taxon>
        <taxon>Euteleostomi</taxon>
        <taxon>Mammalia</taxon>
        <taxon>Eutheria</taxon>
        <taxon>Euarchontoglires</taxon>
        <taxon>Glires</taxon>
        <taxon>Rodentia</taxon>
        <taxon>Myomorpha</taxon>
        <taxon>Muroidea</taxon>
        <taxon>Muridae</taxon>
        <taxon>Murinae</taxon>
        <taxon>Rattus</taxon>
    </lineage>
</organism>
<feature type="chain" id="PRO_0000405841" description="N-lysine methyltransferase SETD6">
    <location>
        <begin position="1"/>
        <end position="474"/>
    </location>
</feature>
<feature type="domain" description="SET" evidence="3">
    <location>
        <begin position="63"/>
        <end position="287"/>
    </location>
</feature>
<feature type="binding site" evidence="1">
    <location>
        <begin position="74"/>
        <end position="76"/>
    </location>
    <ligand>
        <name>S-adenosyl-L-methionine</name>
        <dbReference type="ChEBI" id="CHEBI:59789"/>
    </ligand>
</feature>
<feature type="binding site" evidence="1">
    <location>
        <position position="123"/>
    </location>
    <ligand>
        <name>substrate</name>
    </ligand>
</feature>
<feature type="binding site" evidence="1">
    <location>
        <position position="224"/>
    </location>
    <ligand>
        <name>S-adenosyl-L-methionine</name>
        <dbReference type="ChEBI" id="CHEBI:59789"/>
    </ligand>
</feature>
<feature type="binding site" evidence="1">
    <location>
        <position position="225"/>
    </location>
    <ligand>
        <name>substrate</name>
    </ligand>
</feature>
<feature type="binding site" evidence="1">
    <location>
        <position position="227"/>
    </location>
    <ligand>
        <name>substrate</name>
    </ligand>
</feature>
<feature type="binding site" evidence="1">
    <location>
        <begin position="252"/>
        <end position="253"/>
    </location>
    <ligand>
        <name>S-adenosyl-L-methionine</name>
        <dbReference type="ChEBI" id="CHEBI:59789"/>
    </ligand>
</feature>
<feature type="binding site" evidence="1">
    <location>
        <position position="298"/>
    </location>
    <ligand>
        <name>S-adenosyl-L-methionine</name>
        <dbReference type="ChEBI" id="CHEBI:59789"/>
    </ligand>
</feature>
<feature type="modified residue" description="Phosphoserine" evidence="2">
    <location>
        <position position="14"/>
    </location>
</feature>
<feature type="modified residue" description="N6-methylated lysine; by autocatalysis" evidence="1">
    <location>
        <position position="64"/>
    </location>
</feature>
<feature type="modified residue" description="N6-methylated lysine; by autocatalysis" evidence="1">
    <location>
        <position position="180"/>
    </location>
</feature>
<feature type="modified residue" description="N6-methylated lysine; by autocatalysis" evidence="1">
    <location>
        <position position="373"/>
    </location>
</feature>
<proteinExistence type="inferred from homology"/>